<keyword id="KW-0067">ATP-binding</keyword>
<keyword id="KW-0131">Cell cycle</keyword>
<keyword id="KW-0132">Cell division</keyword>
<keyword id="KW-0133">Cell shape</keyword>
<keyword id="KW-0961">Cell wall biogenesis/degradation</keyword>
<keyword id="KW-0963">Cytoplasm</keyword>
<keyword id="KW-0436">Ligase</keyword>
<keyword id="KW-0547">Nucleotide-binding</keyword>
<keyword id="KW-0573">Peptidoglycan synthesis</keyword>
<sequence>MLLLEFKKTNQTLETIHFIGIGGVGMSGIAEILHNLGYKVQGSDLVENYNTKRLESYGIKIFLGHAEQNITNVSYVVISSAINSNNPEIKEALERKIPIIRRAEMLAELMRLKCSVAVSGSHGKTTTTSLVACLFEAAGLCPTVINGGIINNKSTNAYLGSSNYLIAEADESDATFIHIPSTIAIITNIDPEHLDYYKDFETLIGAFKSFITNLPFYGFAVCCIDHKIVRKLVDDITERKIVTYGIDSEDAHIIAFNINTDIASSTFDVKISLPNVLGTTIIEKITIPTPGRHNILNSLAAIAVGIELDFGIKAIKNGFNNFKGVKRRFTKVAEYNKAVVIDDYAHHPEEIKATLATAKNIADKQNGKVIAIFQPHRYSRMQHLFDDFMLCFNDADMIYITDIYAAGEEPIEGITSQNLVNKITKNKHHDQANFLAELDDAVEVIIDNASSGDMIIMMGAGNISSFANELDGRLSSRT</sequence>
<comment type="function">
    <text evidence="1">Cell wall formation.</text>
</comment>
<comment type="catalytic activity">
    <reaction evidence="1">
        <text>UDP-N-acetyl-alpha-D-muramate + L-alanine + ATP = UDP-N-acetyl-alpha-D-muramoyl-L-alanine + ADP + phosphate + H(+)</text>
        <dbReference type="Rhea" id="RHEA:23372"/>
        <dbReference type="ChEBI" id="CHEBI:15378"/>
        <dbReference type="ChEBI" id="CHEBI:30616"/>
        <dbReference type="ChEBI" id="CHEBI:43474"/>
        <dbReference type="ChEBI" id="CHEBI:57972"/>
        <dbReference type="ChEBI" id="CHEBI:70757"/>
        <dbReference type="ChEBI" id="CHEBI:83898"/>
        <dbReference type="ChEBI" id="CHEBI:456216"/>
        <dbReference type="EC" id="6.3.2.8"/>
    </reaction>
</comment>
<comment type="pathway">
    <text evidence="1">Cell wall biogenesis; peptidoglycan biosynthesis.</text>
</comment>
<comment type="subcellular location">
    <subcellularLocation>
        <location evidence="1">Cytoplasm</location>
    </subcellularLocation>
</comment>
<comment type="similarity">
    <text evidence="1">Belongs to the MurCDEF family.</text>
</comment>
<accession>Q4UKN9</accession>
<dbReference type="EC" id="6.3.2.8" evidence="1"/>
<dbReference type="EMBL" id="CP000053">
    <property type="protein sequence ID" value="AAY61888.1"/>
    <property type="molecule type" value="Genomic_DNA"/>
</dbReference>
<dbReference type="SMR" id="Q4UKN9"/>
<dbReference type="STRING" id="315456.RF_1037"/>
<dbReference type="KEGG" id="rfe:RF_1037"/>
<dbReference type="eggNOG" id="COG0773">
    <property type="taxonomic scope" value="Bacteria"/>
</dbReference>
<dbReference type="HOGENOM" id="CLU_028104_2_2_5"/>
<dbReference type="OrthoDB" id="9804126at2"/>
<dbReference type="UniPathway" id="UPA00219"/>
<dbReference type="Proteomes" id="UP000008548">
    <property type="component" value="Chromosome"/>
</dbReference>
<dbReference type="GO" id="GO:0005737">
    <property type="term" value="C:cytoplasm"/>
    <property type="evidence" value="ECO:0007669"/>
    <property type="project" value="UniProtKB-SubCell"/>
</dbReference>
<dbReference type="GO" id="GO:0005524">
    <property type="term" value="F:ATP binding"/>
    <property type="evidence" value="ECO:0007669"/>
    <property type="project" value="UniProtKB-UniRule"/>
</dbReference>
<dbReference type="GO" id="GO:0008763">
    <property type="term" value="F:UDP-N-acetylmuramate-L-alanine ligase activity"/>
    <property type="evidence" value="ECO:0007669"/>
    <property type="project" value="UniProtKB-UniRule"/>
</dbReference>
<dbReference type="GO" id="GO:0051301">
    <property type="term" value="P:cell division"/>
    <property type="evidence" value="ECO:0007669"/>
    <property type="project" value="UniProtKB-KW"/>
</dbReference>
<dbReference type="GO" id="GO:0071555">
    <property type="term" value="P:cell wall organization"/>
    <property type="evidence" value="ECO:0007669"/>
    <property type="project" value="UniProtKB-KW"/>
</dbReference>
<dbReference type="GO" id="GO:0009252">
    <property type="term" value="P:peptidoglycan biosynthetic process"/>
    <property type="evidence" value="ECO:0007669"/>
    <property type="project" value="UniProtKB-UniRule"/>
</dbReference>
<dbReference type="GO" id="GO:0008360">
    <property type="term" value="P:regulation of cell shape"/>
    <property type="evidence" value="ECO:0007669"/>
    <property type="project" value="UniProtKB-KW"/>
</dbReference>
<dbReference type="Gene3D" id="3.90.190.20">
    <property type="entry name" value="Mur ligase, C-terminal domain"/>
    <property type="match status" value="1"/>
</dbReference>
<dbReference type="Gene3D" id="3.40.1190.10">
    <property type="entry name" value="Mur-like, catalytic domain"/>
    <property type="match status" value="1"/>
</dbReference>
<dbReference type="Gene3D" id="3.40.50.720">
    <property type="entry name" value="NAD(P)-binding Rossmann-like Domain"/>
    <property type="match status" value="1"/>
</dbReference>
<dbReference type="HAMAP" id="MF_00046">
    <property type="entry name" value="MurC"/>
    <property type="match status" value="1"/>
</dbReference>
<dbReference type="InterPro" id="IPR036565">
    <property type="entry name" value="Mur-like_cat_sf"/>
</dbReference>
<dbReference type="InterPro" id="IPR004101">
    <property type="entry name" value="Mur_ligase_C"/>
</dbReference>
<dbReference type="InterPro" id="IPR036615">
    <property type="entry name" value="Mur_ligase_C_dom_sf"/>
</dbReference>
<dbReference type="InterPro" id="IPR013221">
    <property type="entry name" value="Mur_ligase_cen"/>
</dbReference>
<dbReference type="InterPro" id="IPR000713">
    <property type="entry name" value="Mur_ligase_N"/>
</dbReference>
<dbReference type="InterPro" id="IPR050061">
    <property type="entry name" value="MurCDEF_pg_biosynth"/>
</dbReference>
<dbReference type="InterPro" id="IPR005758">
    <property type="entry name" value="UDP-N-AcMur_Ala_ligase_MurC"/>
</dbReference>
<dbReference type="NCBIfam" id="TIGR01082">
    <property type="entry name" value="murC"/>
    <property type="match status" value="1"/>
</dbReference>
<dbReference type="PANTHER" id="PTHR43445:SF3">
    <property type="entry name" value="UDP-N-ACETYLMURAMATE--L-ALANINE LIGASE"/>
    <property type="match status" value="1"/>
</dbReference>
<dbReference type="PANTHER" id="PTHR43445">
    <property type="entry name" value="UDP-N-ACETYLMURAMATE--L-ALANINE LIGASE-RELATED"/>
    <property type="match status" value="1"/>
</dbReference>
<dbReference type="Pfam" id="PF01225">
    <property type="entry name" value="Mur_ligase"/>
    <property type="match status" value="1"/>
</dbReference>
<dbReference type="Pfam" id="PF02875">
    <property type="entry name" value="Mur_ligase_C"/>
    <property type="match status" value="1"/>
</dbReference>
<dbReference type="Pfam" id="PF08245">
    <property type="entry name" value="Mur_ligase_M"/>
    <property type="match status" value="1"/>
</dbReference>
<dbReference type="SUPFAM" id="SSF51984">
    <property type="entry name" value="MurCD N-terminal domain"/>
    <property type="match status" value="1"/>
</dbReference>
<dbReference type="SUPFAM" id="SSF53623">
    <property type="entry name" value="MurD-like peptide ligases, catalytic domain"/>
    <property type="match status" value="1"/>
</dbReference>
<dbReference type="SUPFAM" id="SSF53244">
    <property type="entry name" value="MurD-like peptide ligases, peptide-binding domain"/>
    <property type="match status" value="1"/>
</dbReference>
<gene>
    <name evidence="1" type="primary">murC</name>
    <name type="ordered locus">RF_1037</name>
</gene>
<reference key="1">
    <citation type="journal article" date="2005" name="PLoS Biol.">
        <title>The genome sequence of Rickettsia felis identifies the first putative conjugative plasmid in an obligate intracellular parasite.</title>
        <authorList>
            <person name="Ogata H."/>
            <person name="Renesto P."/>
            <person name="Audic S."/>
            <person name="Robert C."/>
            <person name="Blanc G."/>
            <person name="Fournier P.-E."/>
            <person name="Parinello H."/>
            <person name="Claverie J.-M."/>
            <person name="Raoult D."/>
        </authorList>
    </citation>
    <scope>NUCLEOTIDE SEQUENCE [LARGE SCALE GENOMIC DNA]</scope>
    <source>
        <strain>ATCC VR-1525 / URRWXCal2</strain>
    </source>
</reference>
<name>MURC_RICFE</name>
<evidence type="ECO:0000255" key="1">
    <source>
        <dbReference type="HAMAP-Rule" id="MF_00046"/>
    </source>
</evidence>
<protein>
    <recommendedName>
        <fullName evidence="1">UDP-N-acetylmuramate--L-alanine ligase</fullName>
        <ecNumber evidence="1">6.3.2.8</ecNumber>
    </recommendedName>
    <alternativeName>
        <fullName evidence="1">UDP-N-acetylmuramoyl-L-alanine synthetase</fullName>
    </alternativeName>
</protein>
<organism>
    <name type="scientific">Rickettsia felis (strain ATCC VR-1525 / URRWXCal2)</name>
    <name type="common">Rickettsia azadi</name>
    <dbReference type="NCBI Taxonomy" id="315456"/>
    <lineage>
        <taxon>Bacteria</taxon>
        <taxon>Pseudomonadati</taxon>
        <taxon>Pseudomonadota</taxon>
        <taxon>Alphaproteobacteria</taxon>
        <taxon>Rickettsiales</taxon>
        <taxon>Rickettsiaceae</taxon>
        <taxon>Rickettsieae</taxon>
        <taxon>Rickettsia</taxon>
        <taxon>spotted fever group</taxon>
    </lineage>
</organism>
<proteinExistence type="inferred from homology"/>
<feature type="chain" id="PRO_0000242590" description="UDP-N-acetylmuramate--L-alanine ligase">
    <location>
        <begin position="1"/>
        <end position="478"/>
    </location>
</feature>
<feature type="binding site" evidence="1">
    <location>
        <begin position="120"/>
        <end position="126"/>
    </location>
    <ligand>
        <name>ATP</name>
        <dbReference type="ChEBI" id="CHEBI:30616"/>
    </ligand>
</feature>